<proteinExistence type="inferred from homology"/>
<dbReference type="EMBL" id="CP000232">
    <property type="protein sequence ID" value="ABC19208.1"/>
    <property type="molecule type" value="Genomic_DNA"/>
</dbReference>
<dbReference type="RefSeq" id="YP_429751.1">
    <property type="nucleotide sequence ID" value="NC_007644.1"/>
</dbReference>
<dbReference type="SMR" id="Q2RK31"/>
<dbReference type="STRING" id="264732.Moth_0891"/>
<dbReference type="EnsemblBacteria" id="ABC19208">
    <property type="protein sequence ID" value="ABC19208"/>
    <property type="gene ID" value="Moth_0891"/>
</dbReference>
<dbReference type="KEGG" id="mta:Moth_0891"/>
<dbReference type="PATRIC" id="fig|264732.11.peg.958"/>
<dbReference type="eggNOG" id="COG2052">
    <property type="taxonomic scope" value="Bacteria"/>
</dbReference>
<dbReference type="HOGENOM" id="CLU_165326_0_0_9"/>
<dbReference type="OrthoDB" id="5432174at2"/>
<dbReference type="HAMAP" id="MF_01503">
    <property type="entry name" value="RemA"/>
    <property type="match status" value="1"/>
</dbReference>
<dbReference type="InterPro" id="IPR007169">
    <property type="entry name" value="RemA-like"/>
</dbReference>
<dbReference type="NCBIfam" id="NF046064">
    <property type="entry name" value="MtxBflmRegRemA"/>
    <property type="match status" value="1"/>
</dbReference>
<dbReference type="NCBIfam" id="NF003315">
    <property type="entry name" value="PRK04323.1"/>
    <property type="match status" value="1"/>
</dbReference>
<dbReference type="PANTHER" id="PTHR38449:SF1">
    <property type="entry name" value="REGULATORY PROTEIN SSL2874-RELATED"/>
    <property type="match status" value="1"/>
</dbReference>
<dbReference type="PANTHER" id="PTHR38449">
    <property type="entry name" value="REGULATORY PROTEIN TM_1690-RELATED"/>
    <property type="match status" value="1"/>
</dbReference>
<dbReference type="Pfam" id="PF04025">
    <property type="entry name" value="RemA-like"/>
    <property type="match status" value="1"/>
</dbReference>
<comment type="similarity">
    <text evidence="1">Belongs to the RemA family.</text>
</comment>
<evidence type="ECO:0000255" key="1">
    <source>
        <dbReference type="HAMAP-Rule" id="MF_01503"/>
    </source>
</evidence>
<reference key="1">
    <citation type="journal article" date="2008" name="Environ. Microbiol.">
        <title>The complete genome sequence of Moorella thermoacetica (f. Clostridium thermoaceticum).</title>
        <authorList>
            <person name="Pierce E."/>
            <person name="Xie G."/>
            <person name="Barabote R.D."/>
            <person name="Saunders E."/>
            <person name="Han C.S."/>
            <person name="Detter J.C."/>
            <person name="Richardson P."/>
            <person name="Brettin T.S."/>
            <person name="Das A."/>
            <person name="Ljungdahl L.G."/>
            <person name="Ragsdale S.W."/>
        </authorList>
    </citation>
    <scope>NUCLEOTIDE SEQUENCE [LARGE SCALE GENOMIC DNA]</scope>
    <source>
        <strain>ATCC 39073 / JCM 9320</strain>
    </source>
</reference>
<gene>
    <name type="ordered locus">Moth_0891</name>
</gene>
<sequence>MDIKLINIGFGNIVSARRIVAIVSPESAPIKRIIQEARDRGMLIDATYGRRTRAVIITDSDHIILSAVQPETVAHRLSSREPLASAEEPVD</sequence>
<organism>
    <name type="scientific">Moorella thermoacetica (strain ATCC 39073 / JCM 9320)</name>
    <dbReference type="NCBI Taxonomy" id="264732"/>
    <lineage>
        <taxon>Bacteria</taxon>
        <taxon>Bacillati</taxon>
        <taxon>Bacillota</taxon>
        <taxon>Clostridia</taxon>
        <taxon>Moorellales</taxon>
        <taxon>Moorellaceae</taxon>
        <taxon>Moorella</taxon>
    </lineage>
</organism>
<protein>
    <recommendedName>
        <fullName evidence="1">Putative regulatory protein Moth_0891</fullName>
    </recommendedName>
</protein>
<accession>Q2RK31</accession>
<name>Y891_MOOTA</name>
<feature type="chain" id="PRO_0000230162" description="Putative regulatory protein Moth_0891">
    <location>
        <begin position="1"/>
        <end position="91"/>
    </location>
</feature>